<sequence>MDRKETIKIKVGDKFIGGDSPITVQSMTNTDTRDVEKTVEQIKKLEEVDCDIIRCAVPDDEACQALGKITKKIAIPLVADIHFDYRLAIKAIDNGISALRINPGNIGNEEKVNLVSKKAKEKGIPIRIGVNSGSLEKDILNKYGGVCSDALVESALRHVEILNKVDFHDIVISIKSSNVNQMIESYKKISSKVNYPLHLGVTEAGTPWRGIIKSSVGIGTLLSQGIGDTIRVSLTGDPIEEIKAGKEILRALNLYSKGVEFISCPTCGRTEINLIKIAKEVEKRLDGFDKNIKVAIMGCVVNGPGEARDADIGIAGGKGYGLIFKKGEVVRKLKEEDLVEGLIEEIKNI</sequence>
<dbReference type="EC" id="1.17.7.3" evidence="1"/>
<dbReference type="EMBL" id="AE015927">
    <property type="protein sequence ID" value="AAO35837.1"/>
    <property type="molecule type" value="Genomic_DNA"/>
</dbReference>
<dbReference type="RefSeq" id="WP_011099499.1">
    <property type="nucleotide sequence ID" value="NC_004557.1"/>
</dbReference>
<dbReference type="SMR" id="Q895K3"/>
<dbReference type="STRING" id="212717.CTC_01270"/>
<dbReference type="GeneID" id="24254146"/>
<dbReference type="KEGG" id="ctc:CTC_01270"/>
<dbReference type="HOGENOM" id="CLU_042258_0_0_9"/>
<dbReference type="OrthoDB" id="9803214at2"/>
<dbReference type="UniPathway" id="UPA00056">
    <property type="reaction ID" value="UER00096"/>
</dbReference>
<dbReference type="Proteomes" id="UP000001412">
    <property type="component" value="Chromosome"/>
</dbReference>
<dbReference type="GO" id="GO:0051539">
    <property type="term" value="F:4 iron, 4 sulfur cluster binding"/>
    <property type="evidence" value="ECO:0007669"/>
    <property type="project" value="UniProtKB-UniRule"/>
</dbReference>
<dbReference type="GO" id="GO:0046429">
    <property type="term" value="F:4-hydroxy-3-methylbut-2-en-1-yl diphosphate synthase activity (ferredoxin)"/>
    <property type="evidence" value="ECO:0007669"/>
    <property type="project" value="UniProtKB-UniRule"/>
</dbReference>
<dbReference type="GO" id="GO:0141197">
    <property type="term" value="F:4-hydroxy-3-methylbut-2-enyl-diphosphate synthase activity (flavodoxin)"/>
    <property type="evidence" value="ECO:0007669"/>
    <property type="project" value="UniProtKB-EC"/>
</dbReference>
<dbReference type="GO" id="GO:0005506">
    <property type="term" value="F:iron ion binding"/>
    <property type="evidence" value="ECO:0007669"/>
    <property type="project" value="InterPro"/>
</dbReference>
<dbReference type="GO" id="GO:0019288">
    <property type="term" value="P:isopentenyl diphosphate biosynthetic process, methylerythritol 4-phosphate pathway"/>
    <property type="evidence" value="ECO:0007669"/>
    <property type="project" value="UniProtKB-UniRule"/>
</dbReference>
<dbReference type="GO" id="GO:0016114">
    <property type="term" value="P:terpenoid biosynthetic process"/>
    <property type="evidence" value="ECO:0007669"/>
    <property type="project" value="InterPro"/>
</dbReference>
<dbReference type="FunFam" id="3.20.20.20:FF:000001">
    <property type="entry name" value="4-hydroxy-3-methylbut-2-en-1-yl diphosphate synthase (flavodoxin)"/>
    <property type="match status" value="1"/>
</dbReference>
<dbReference type="FunFam" id="3.30.413.10:FF:000005">
    <property type="entry name" value="4-hydroxy-3-methylbut-2-en-1-yl diphosphate synthase (flavodoxin)"/>
    <property type="match status" value="1"/>
</dbReference>
<dbReference type="Gene3D" id="3.20.20.20">
    <property type="entry name" value="Dihydropteroate synthase-like"/>
    <property type="match status" value="1"/>
</dbReference>
<dbReference type="Gene3D" id="3.30.413.10">
    <property type="entry name" value="Sulfite Reductase Hemoprotein, domain 1"/>
    <property type="match status" value="1"/>
</dbReference>
<dbReference type="HAMAP" id="MF_00159">
    <property type="entry name" value="IspG"/>
    <property type="match status" value="1"/>
</dbReference>
<dbReference type="InterPro" id="IPR011005">
    <property type="entry name" value="Dihydropteroate_synth-like_sf"/>
</dbReference>
<dbReference type="InterPro" id="IPR016425">
    <property type="entry name" value="IspG_bac"/>
</dbReference>
<dbReference type="InterPro" id="IPR004588">
    <property type="entry name" value="IspG_bac-typ"/>
</dbReference>
<dbReference type="InterPro" id="IPR045854">
    <property type="entry name" value="NO2/SO3_Rdtase_4Fe4S_sf"/>
</dbReference>
<dbReference type="NCBIfam" id="TIGR00612">
    <property type="entry name" value="ispG_gcpE"/>
    <property type="match status" value="1"/>
</dbReference>
<dbReference type="NCBIfam" id="NF001540">
    <property type="entry name" value="PRK00366.1"/>
    <property type="match status" value="1"/>
</dbReference>
<dbReference type="PANTHER" id="PTHR30454">
    <property type="entry name" value="4-HYDROXY-3-METHYLBUT-2-EN-1-YL DIPHOSPHATE SYNTHASE"/>
    <property type="match status" value="1"/>
</dbReference>
<dbReference type="PANTHER" id="PTHR30454:SF0">
    <property type="entry name" value="4-HYDROXY-3-METHYLBUT-2-EN-1-YL DIPHOSPHATE SYNTHASE (FERREDOXIN), CHLOROPLASTIC"/>
    <property type="match status" value="1"/>
</dbReference>
<dbReference type="Pfam" id="PF04551">
    <property type="entry name" value="GcpE"/>
    <property type="match status" value="1"/>
</dbReference>
<dbReference type="PIRSF" id="PIRSF004640">
    <property type="entry name" value="IspG"/>
    <property type="match status" value="1"/>
</dbReference>
<dbReference type="SUPFAM" id="SSF51717">
    <property type="entry name" value="Dihydropteroate synthetase-like"/>
    <property type="match status" value="1"/>
</dbReference>
<dbReference type="SUPFAM" id="SSF56014">
    <property type="entry name" value="Nitrite and sulphite reductase 4Fe-4S domain-like"/>
    <property type="match status" value="1"/>
</dbReference>
<organism>
    <name type="scientific">Clostridium tetani (strain Massachusetts / E88)</name>
    <dbReference type="NCBI Taxonomy" id="212717"/>
    <lineage>
        <taxon>Bacteria</taxon>
        <taxon>Bacillati</taxon>
        <taxon>Bacillota</taxon>
        <taxon>Clostridia</taxon>
        <taxon>Eubacteriales</taxon>
        <taxon>Clostridiaceae</taxon>
        <taxon>Clostridium</taxon>
    </lineage>
</organism>
<name>ISPG_CLOTE</name>
<gene>
    <name evidence="1" type="primary">ispG</name>
    <name type="synonym">gcpE</name>
    <name type="ordered locus">CTC_01270</name>
</gene>
<evidence type="ECO:0000255" key="1">
    <source>
        <dbReference type="HAMAP-Rule" id="MF_00159"/>
    </source>
</evidence>
<feature type="chain" id="PRO_0000190565" description="4-hydroxy-3-methylbut-2-en-1-yl diphosphate synthase (flavodoxin)">
    <location>
        <begin position="1"/>
        <end position="349"/>
    </location>
</feature>
<feature type="binding site" evidence="1">
    <location>
        <position position="264"/>
    </location>
    <ligand>
        <name>[4Fe-4S] cluster</name>
        <dbReference type="ChEBI" id="CHEBI:49883"/>
    </ligand>
</feature>
<feature type="binding site" evidence="1">
    <location>
        <position position="267"/>
    </location>
    <ligand>
        <name>[4Fe-4S] cluster</name>
        <dbReference type="ChEBI" id="CHEBI:49883"/>
    </ligand>
</feature>
<feature type="binding site" evidence="1">
    <location>
        <position position="299"/>
    </location>
    <ligand>
        <name>[4Fe-4S] cluster</name>
        <dbReference type="ChEBI" id="CHEBI:49883"/>
    </ligand>
</feature>
<feature type="binding site" evidence="1">
    <location>
        <position position="306"/>
    </location>
    <ligand>
        <name>[4Fe-4S] cluster</name>
        <dbReference type="ChEBI" id="CHEBI:49883"/>
    </ligand>
</feature>
<protein>
    <recommendedName>
        <fullName evidence="1">4-hydroxy-3-methylbut-2-en-1-yl diphosphate synthase (flavodoxin)</fullName>
        <ecNumber evidence="1">1.17.7.3</ecNumber>
    </recommendedName>
    <alternativeName>
        <fullName evidence="1">1-hydroxy-2-methyl-2-(E)-butenyl 4-diphosphate synthase</fullName>
    </alternativeName>
</protein>
<accession>Q895K3</accession>
<reference key="1">
    <citation type="journal article" date="2003" name="Proc. Natl. Acad. Sci. U.S.A.">
        <title>The genome sequence of Clostridium tetani, the causative agent of tetanus disease.</title>
        <authorList>
            <person name="Brueggemann H."/>
            <person name="Baeumer S."/>
            <person name="Fricke W.F."/>
            <person name="Wiezer A."/>
            <person name="Liesegang H."/>
            <person name="Decker I."/>
            <person name="Herzberg C."/>
            <person name="Martinez-Arias R."/>
            <person name="Merkl R."/>
            <person name="Henne A."/>
            <person name="Gottschalk G."/>
        </authorList>
    </citation>
    <scope>NUCLEOTIDE SEQUENCE [LARGE SCALE GENOMIC DNA]</scope>
    <source>
        <strain>Massachusetts / E88</strain>
    </source>
</reference>
<proteinExistence type="inferred from homology"/>
<comment type="function">
    <text evidence="1">Converts 2C-methyl-D-erythritol 2,4-cyclodiphosphate (ME-2,4cPP) into 1-hydroxy-2-methyl-2-(E)-butenyl 4-diphosphate.</text>
</comment>
<comment type="catalytic activity">
    <reaction evidence="1">
        <text>(2E)-4-hydroxy-3-methylbut-2-enyl diphosphate + oxidized [flavodoxin] + H2O + 2 H(+) = 2-C-methyl-D-erythritol 2,4-cyclic diphosphate + reduced [flavodoxin]</text>
        <dbReference type="Rhea" id="RHEA:43604"/>
        <dbReference type="Rhea" id="RHEA-COMP:10622"/>
        <dbReference type="Rhea" id="RHEA-COMP:10623"/>
        <dbReference type="ChEBI" id="CHEBI:15377"/>
        <dbReference type="ChEBI" id="CHEBI:15378"/>
        <dbReference type="ChEBI" id="CHEBI:57618"/>
        <dbReference type="ChEBI" id="CHEBI:58210"/>
        <dbReference type="ChEBI" id="CHEBI:58483"/>
        <dbReference type="ChEBI" id="CHEBI:128753"/>
        <dbReference type="EC" id="1.17.7.3"/>
    </reaction>
</comment>
<comment type="cofactor">
    <cofactor evidence="1">
        <name>[4Fe-4S] cluster</name>
        <dbReference type="ChEBI" id="CHEBI:49883"/>
    </cofactor>
    <text evidence="1">Binds 1 [4Fe-4S] cluster.</text>
</comment>
<comment type="pathway">
    <text evidence="1">Isoprenoid biosynthesis; isopentenyl diphosphate biosynthesis via DXP pathway; isopentenyl diphosphate from 1-deoxy-D-xylulose 5-phosphate: step 5/6.</text>
</comment>
<comment type="similarity">
    <text evidence="1">Belongs to the IspG family.</text>
</comment>
<keyword id="KW-0004">4Fe-4S</keyword>
<keyword id="KW-0408">Iron</keyword>
<keyword id="KW-0411">Iron-sulfur</keyword>
<keyword id="KW-0414">Isoprene biosynthesis</keyword>
<keyword id="KW-0479">Metal-binding</keyword>
<keyword id="KW-0560">Oxidoreductase</keyword>
<keyword id="KW-1185">Reference proteome</keyword>